<accession>Q54Y51</accession>
<gene>
    <name type="primary">ppcdc</name>
    <name type="ORF">DDB_G0278413</name>
</gene>
<keyword id="KW-0173">Coenzyme A biosynthesis</keyword>
<keyword id="KW-0210">Decarboxylase</keyword>
<keyword id="KW-0285">Flavoprotein</keyword>
<keyword id="KW-0288">FMN</keyword>
<keyword id="KW-0456">Lyase</keyword>
<keyword id="KW-1185">Reference proteome</keyword>
<sequence>MTITINNYNNDKKNLILGLTGSVATIKAKLLVEQLIQHFNLIVIPTETSLKFLSDQDFEFISSKCKIYKDKDEWENVDLLKRSALHIDLRNWANSILISPCSANTLGKISNGLCDNLLTSLIRAWDYKNKSMILAPAMNTMMWENPFTFKHIETLKSISPNVFIIDPIEKKLFCGDIGMGAMEQVPKIVDFTINNLK</sequence>
<dbReference type="EC" id="4.1.1.36"/>
<dbReference type="EMBL" id="AAFI02000023">
    <property type="protein sequence ID" value="EAL68379.1"/>
    <property type="molecule type" value="Genomic_DNA"/>
</dbReference>
<dbReference type="RefSeq" id="XP_642351.1">
    <property type="nucleotide sequence ID" value="XM_637259.1"/>
</dbReference>
<dbReference type="SMR" id="Q54Y51"/>
<dbReference type="FunCoup" id="Q54Y51">
    <property type="interactions" value="134"/>
</dbReference>
<dbReference type="STRING" id="44689.Q54Y51"/>
<dbReference type="PaxDb" id="44689-DDB0231515"/>
<dbReference type="EnsemblProtists" id="EAL68379">
    <property type="protein sequence ID" value="EAL68379"/>
    <property type="gene ID" value="DDB_G0278413"/>
</dbReference>
<dbReference type="GeneID" id="8621556"/>
<dbReference type="KEGG" id="ddi:DDB_G0278413"/>
<dbReference type="dictyBase" id="DDB_G0278413">
    <property type="gene designation" value="ppcdc"/>
</dbReference>
<dbReference type="VEuPathDB" id="AmoebaDB:DDB_G0278413"/>
<dbReference type="eggNOG" id="KOG0672">
    <property type="taxonomic scope" value="Eukaryota"/>
</dbReference>
<dbReference type="HOGENOM" id="CLU_033319_3_2_1"/>
<dbReference type="InParanoid" id="Q54Y51"/>
<dbReference type="OMA" id="KGLACGD"/>
<dbReference type="PhylomeDB" id="Q54Y51"/>
<dbReference type="Reactome" id="R-DDI-196783">
    <property type="pathway name" value="Coenzyme A biosynthesis"/>
</dbReference>
<dbReference type="UniPathway" id="UPA00241">
    <property type="reaction ID" value="UER00354"/>
</dbReference>
<dbReference type="PRO" id="PR:Q54Y51"/>
<dbReference type="Proteomes" id="UP000002195">
    <property type="component" value="Chromosome 3"/>
</dbReference>
<dbReference type="GO" id="GO:0071513">
    <property type="term" value="C:phosphopantothenoylcysteine decarboxylase complex"/>
    <property type="evidence" value="ECO:0000318"/>
    <property type="project" value="GO_Central"/>
</dbReference>
<dbReference type="GO" id="GO:0010181">
    <property type="term" value="F:FMN binding"/>
    <property type="evidence" value="ECO:0000318"/>
    <property type="project" value="GO_Central"/>
</dbReference>
<dbReference type="GO" id="GO:0004633">
    <property type="term" value="F:phosphopantothenoylcysteine decarboxylase activity"/>
    <property type="evidence" value="ECO:0000250"/>
    <property type="project" value="dictyBase"/>
</dbReference>
<dbReference type="GO" id="GO:0015937">
    <property type="term" value="P:coenzyme A biosynthetic process"/>
    <property type="evidence" value="ECO:0000250"/>
    <property type="project" value="dictyBase"/>
</dbReference>
<dbReference type="FunFam" id="3.40.50.1950:FF:000004">
    <property type="entry name" value="Phosphopantothenoylcysteine decarboxylase"/>
    <property type="match status" value="1"/>
</dbReference>
<dbReference type="Gene3D" id="3.40.50.1950">
    <property type="entry name" value="Flavin prenyltransferase-like"/>
    <property type="match status" value="1"/>
</dbReference>
<dbReference type="InterPro" id="IPR036551">
    <property type="entry name" value="Flavin_trans-like"/>
</dbReference>
<dbReference type="InterPro" id="IPR003382">
    <property type="entry name" value="Flavoprotein"/>
</dbReference>
<dbReference type="PANTHER" id="PTHR14359">
    <property type="entry name" value="HOMO-OLIGOMERIC FLAVIN CONTAINING CYS DECARBOXYLASE FAMILY"/>
    <property type="match status" value="1"/>
</dbReference>
<dbReference type="PANTHER" id="PTHR14359:SF6">
    <property type="entry name" value="PHOSPHOPANTOTHENOYLCYSTEINE DECARBOXYLASE"/>
    <property type="match status" value="1"/>
</dbReference>
<dbReference type="Pfam" id="PF02441">
    <property type="entry name" value="Flavoprotein"/>
    <property type="match status" value="1"/>
</dbReference>
<dbReference type="SUPFAM" id="SSF52507">
    <property type="entry name" value="Homo-oligomeric flavin-containing Cys decarboxylases, HFCD"/>
    <property type="match status" value="1"/>
</dbReference>
<proteinExistence type="inferred from homology"/>
<protein>
    <recommendedName>
        <fullName>Putative phosphopantothenoylcysteine decarboxylase</fullName>
        <shortName>PPC-DC</shortName>
        <ecNumber>4.1.1.36</ecNumber>
    </recommendedName>
</protein>
<evidence type="ECO:0000250" key="1"/>
<evidence type="ECO:0000305" key="2"/>
<comment type="function">
    <text evidence="1">Necessary for the biosynthesis of coenzyme A. Catalyzes the decarboxylation of 4-phosphopantothenoylcysteine to form 4'-phosphopantotheine (By similarity).</text>
</comment>
<comment type="catalytic activity">
    <reaction>
        <text>N-[(R)-4-phosphopantothenoyl]-L-cysteine + H(+) = (R)-4'-phosphopantetheine + CO2</text>
        <dbReference type="Rhea" id="RHEA:16793"/>
        <dbReference type="ChEBI" id="CHEBI:15378"/>
        <dbReference type="ChEBI" id="CHEBI:16526"/>
        <dbReference type="ChEBI" id="CHEBI:59458"/>
        <dbReference type="ChEBI" id="CHEBI:61723"/>
        <dbReference type="EC" id="4.1.1.36"/>
    </reaction>
</comment>
<comment type="cofactor">
    <cofactor evidence="1">
        <name>FMN</name>
        <dbReference type="ChEBI" id="CHEBI:58210"/>
    </cofactor>
    <text evidence="1">Binds 1 FMN per subunit.</text>
</comment>
<comment type="pathway">
    <text>Cofactor biosynthesis; coenzyme A biosynthesis; CoA from (R)-pantothenate: step 3/5.</text>
</comment>
<comment type="subunit">
    <text evidence="2">Homotrimer.</text>
</comment>
<comment type="similarity">
    <text evidence="2">Belongs to the HFCD (homooligomeric flavin containing Cys decarboxylase) superfamily.</text>
</comment>
<organism>
    <name type="scientific">Dictyostelium discoideum</name>
    <name type="common">Social amoeba</name>
    <dbReference type="NCBI Taxonomy" id="44689"/>
    <lineage>
        <taxon>Eukaryota</taxon>
        <taxon>Amoebozoa</taxon>
        <taxon>Evosea</taxon>
        <taxon>Eumycetozoa</taxon>
        <taxon>Dictyostelia</taxon>
        <taxon>Dictyosteliales</taxon>
        <taxon>Dictyosteliaceae</taxon>
        <taxon>Dictyostelium</taxon>
    </lineage>
</organism>
<feature type="chain" id="PRO_0000367258" description="Putative phosphopantothenoylcysteine decarboxylase">
    <location>
        <begin position="1"/>
        <end position="197"/>
    </location>
</feature>
<feature type="active site" description="Proton donor" evidence="1">
    <location>
        <position position="174"/>
    </location>
</feature>
<feature type="binding site" evidence="1">
    <location>
        <position position="52"/>
    </location>
    <ligand>
        <name>FMN</name>
        <dbReference type="ChEBI" id="CHEBI:58210"/>
    </ligand>
</feature>
<feature type="binding site" evidence="1">
    <location>
        <begin position="102"/>
        <end position="105"/>
    </location>
    <ligand>
        <name>FMN</name>
        <dbReference type="ChEBI" id="CHEBI:58210"/>
    </ligand>
</feature>
<feature type="binding site" evidence="1">
    <location>
        <position position="139"/>
    </location>
    <ligand>
        <name>substrate</name>
    </ligand>
</feature>
<name>COAC_DICDI</name>
<reference key="1">
    <citation type="journal article" date="2005" name="Nature">
        <title>The genome of the social amoeba Dictyostelium discoideum.</title>
        <authorList>
            <person name="Eichinger L."/>
            <person name="Pachebat J.A."/>
            <person name="Gloeckner G."/>
            <person name="Rajandream M.A."/>
            <person name="Sucgang R."/>
            <person name="Berriman M."/>
            <person name="Song J."/>
            <person name="Olsen R."/>
            <person name="Szafranski K."/>
            <person name="Xu Q."/>
            <person name="Tunggal B."/>
            <person name="Kummerfeld S."/>
            <person name="Madera M."/>
            <person name="Konfortov B.A."/>
            <person name="Rivero F."/>
            <person name="Bankier A.T."/>
            <person name="Lehmann R."/>
            <person name="Hamlin N."/>
            <person name="Davies R."/>
            <person name="Gaudet P."/>
            <person name="Fey P."/>
            <person name="Pilcher K."/>
            <person name="Chen G."/>
            <person name="Saunders D."/>
            <person name="Sodergren E.J."/>
            <person name="Davis P."/>
            <person name="Kerhornou A."/>
            <person name="Nie X."/>
            <person name="Hall N."/>
            <person name="Anjard C."/>
            <person name="Hemphill L."/>
            <person name="Bason N."/>
            <person name="Farbrother P."/>
            <person name="Desany B."/>
            <person name="Just E."/>
            <person name="Morio T."/>
            <person name="Rost R."/>
            <person name="Churcher C.M."/>
            <person name="Cooper J."/>
            <person name="Haydock S."/>
            <person name="van Driessche N."/>
            <person name="Cronin A."/>
            <person name="Goodhead I."/>
            <person name="Muzny D.M."/>
            <person name="Mourier T."/>
            <person name="Pain A."/>
            <person name="Lu M."/>
            <person name="Harper D."/>
            <person name="Lindsay R."/>
            <person name="Hauser H."/>
            <person name="James K.D."/>
            <person name="Quiles M."/>
            <person name="Madan Babu M."/>
            <person name="Saito T."/>
            <person name="Buchrieser C."/>
            <person name="Wardroper A."/>
            <person name="Felder M."/>
            <person name="Thangavelu M."/>
            <person name="Johnson D."/>
            <person name="Knights A."/>
            <person name="Loulseged H."/>
            <person name="Mungall K.L."/>
            <person name="Oliver K."/>
            <person name="Price C."/>
            <person name="Quail M.A."/>
            <person name="Urushihara H."/>
            <person name="Hernandez J."/>
            <person name="Rabbinowitsch E."/>
            <person name="Steffen D."/>
            <person name="Sanders M."/>
            <person name="Ma J."/>
            <person name="Kohara Y."/>
            <person name="Sharp S."/>
            <person name="Simmonds M.N."/>
            <person name="Spiegler S."/>
            <person name="Tivey A."/>
            <person name="Sugano S."/>
            <person name="White B."/>
            <person name="Walker D."/>
            <person name="Woodward J.R."/>
            <person name="Winckler T."/>
            <person name="Tanaka Y."/>
            <person name="Shaulsky G."/>
            <person name="Schleicher M."/>
            <person name="Weinstock G.M."/>
            <person name="Rosenthal A."/>
            <person name="Cox E.C."/>
            <person name="Chisholm R.L."/>
            <person name="Gibbs R.A."/>
            <person name="Loomis W.F."/>
            <person name="Platzer M."/>
            <person name="Kay R.R."/>
            <person name="Williams J.G."/>
            <person name="Dear P.H."/>
            <person name="Noegel A.A."/>
            <person name="Barrell B.G."/>
            <person name="Kuspa A."/>
        </authorList>
    </citation>
    <scope>NUCLEOTIDE SEQUENCE [LARGE SCALE GENOMIC DNA]</scope>
    <source>
        <strain>AX4</strain>
    </source>
</reference>